<name>NTNG1_HUMAN</name>
<organism>
    <name type="scientific">Homo sapiens</name>
    <name type="common">Human</name>
    <dbReference type="NCBI Taxonomy" id="9606"/>
    <lineage>
        <taxon>Eukaryota</taxon>
        <taxon>Metazoa</taxon>
        <taxon>Chordata</taxon>
        <taxon>Craniata</taxon>
        <taxon>Vertebrata</taxon>
        <taxon>Euteleostomi</taxon>
        <taxon>Mammalia</taxon>
        <taxon>Eutheria</taxon>
        <taxon>Euarchontoglires</taxon>
        <taxon>Primates</taxon>
        <taxon>Haplorrhini</taxon>
        <taxon>Catarrhini</taxon>
        <taxon>Hominidae</taxon>
        <taxon>Homo</taxon>
    </lineage>
</organism>
<keyword id="KW-0002">3D-structure</keyword>
<keyword id="KW-0025">Alternative splicing</keyword>
<keyword id="KW-1003">Cell membrane</keyword>
<keyword id="KW-0217">Developmental protein</keyword>
<keyword id="KW-0221">Differentiation</keyword>
<keyword id="KW-0903">Direct protein sequencing</keyword>
<keyword id="KW-1015">Disulfide bond</keyword>
<keyword id="KW-0325">Glycoprotein</keyword>
<keyword id="KW-0336">GPI-anchor</keyword>
<keyword id="KW-0424">Laminin EGF-like domain</keyword>
<keyword id="KW-0449">Lipoprotein</keyword>
<keyword id="KW-0472">Membrane</keyword>
<keyword id="KW-0524">Neurogenesis</keyword>
<keyword id="KW-1267">Proteomics identification</keyword>
<keyword id="KW-1185">Reference proteome</keyword>
<keyword id="KW-0677">Repeat</keyword>
<keyword id="KW-0732">Signal</keyword>
<reference key="1">
    <citation type="journal article" date="1999" name="DNA Res.">
        <title>Prediction of the coding sequences of unidentified human genes. XIII. The complete sequences of 100 new cDNA clones from brain which code for large proteins in vitro.</title>
        <authorList>
            <person name="Nagase T."/>
            <person name="Ishikawa K."/>
            <person name="Suyama M."/>
            <person name="Kikuno R."/>
            <person name="Hirosawa M."/>
            <person name="Miyajima N."/>
            <person name="Tanaka A."/>
            <person name="Kotani H."/>
            <person name="Nomura N."/>
            <person name="Ohara O."/>
        </authorList>
    </citation>
    <scope>NUCLEOTIDE SEQUENCE [LARGE SCALE MRNA] (ISOFORM 2)</scope>
    <source>
        <tissue>Brain</tissue>
    </source>
</reference>
<reference key="2">
    <citation type="journal article" date="2003" name="Genome Res.">
        <title>The secreted protein discovery initiative (SPDI), a large-scale effort to identify novel human secreted and transmembrane proteins: a bioinformatics assessment.</title>
        <authorList>
            <person name="Clark H.F."/>
            <person name="Gurney A.L."/>
            <person name="Abaya E."/>
            <person name="Baker K."/>
            <person name="Baldwin D.T."/>
            <person name="Brush J."/>
            <person name="Chen J."/>
            <person name="Chow B."/>
            <person name="Chui C."/>
            <person name="Crowley C."/>
            <person name="Currell B."/>
            <person name="Deuel B."/>
            <person name="Dowd P."/>
            <person name="Eaton D."/>
            <person name="Foster J.S."/>
            <person name="Grimaldi C."/>
            <person name="Gu Q."/>
            <person name="Hass P.E."/>
            <person name="Heldens S."/>
            <person name="Huang A."/>
            <person name="Kim H.S."/>
            <person name="Klimowski L."/>
            <person name="Jin Y."/>
            <person name="Johnson S."/>
            <person name="Lee J."/>
            <person name="Lewis L."/>
            <person name="Liao D."/>
            <person name="Mark M.R."/>
            <person name="Robbie E."/>
            <person name="Sanchez C."/>
            <person name="Schoenfeld J."/>
            <person name="Seshagiri S."/>
            <person name="Simmons L."/>
            <person name="Singh J."/>
            <person name="Smith V."/>
            <person name="Stinson J."/>
            <person name="Vagts A."/>
            <person name="Vandlen R.L."/>
            <person name="Watanabe C."/>
            <person name="Wieand D."/>
            <person name="Woods K."/>
            <person name="Xie M.-H."/>
            <person name="Yansura D.G."/>
            <person name="Yi S."/>
            <person name="Yu G."/>
            <person name="Yuan J."/>
            <person name="Zhang M."/>
            <person name="Zhang Z."/>
            <person name="Goddard A.D."/>
            <person name="Wood W.I."/>
            <person name="Godowski P.J."/>
            <person name="Gray A.M."/>
        </authorList>
    </citation>
    <scope>NUCLEOTIDE SEQUENCE [LARGE SCALE MRNA] (ISOFORM 1)</scope>
</reference>
<reference key="3">
    <citation type="journal article" date="2007" name="BMC Genomics">
        <title>The full-ORF clone resource of the German cDNA consortium.</title>
        <authorList>
            <person name="Bechtel S."/>
            <person name="Rosenfelder H."/>
            <person name="Duda A."/>
            <person name="Schmidt C.P."/>
            <person name="Ernst U."/>
            <person name="Wellenreuther R."/>
            <person name="Mehrle A."/>
            <person name="Schuster C."/>
            <person name="Bahr A."/>
            <person name="Bloecker H."/>
            <person name="Heubner D."/>
            <person name="Hoerlein A."/>
            <person name="Michel G."/>
            <person name="Wedler H."/>
            <person name="Koehrer K."/>
            <person name="Ottenwaelder B."/>
            <person name="Poustka A."/>
            <person name="Wiemann S."/>
            <person name="Schupp I."/>
        </authorList>
    </citation>
    <scope>NUCLEOTIDE SEQUENCE [LARGE SCALE MRNA] (ISOFORM 2)</scope>
    <source>
        <tissue>Cerebellum</tissue>
    </source>
</reference>
<reference key="4">
    <citation type="journal article" date="2006" name="Nature">
        <title>The DNA sequence and biological annotation of human chromosome 1.</title>
        <authorList>
            <person name="Gregory S.G."/>
            <person name="Barlow K.F."/>
            <person name="McLay K.E."/>
            <person name="Kaul R."/>
            <person name="Swarbreck D."/>
            <person name="Dunham A."/>
            <person name="Scott C.E."/>
            <person name="Howe K.L."/>
            <person name="Woodfine K."/>
            <person name="Spencer C.C.A."/>
            <person name="Jones M.C."/>
            <person name="Gillson C."/>
            <person name="Searle S."/>
            <person name="Zhou Y."/>
            <person name="Kokocinski F."/>
            <person name="McDonald L."/>
            <person name="Evans R."/>
            <person name="Phillips K."/>
            <person name="Atkinson A."/>
            <person name="Cooper R."/>
            <person name="Jones C."/>
            <person name="Hall R.E."/>
            <person name="Andrews T.D."/>
            <person name="Lloyd C."/>
            <person name="Ainscough R."/>
            <person name="Almeida J.P."/>
            <person name="Ambrose K.D."/>
            <person name="Anderson F."/>
            <person name="Andrew R.W."/>
            <person name="Ashwell R.I.S."/>
            <person name="Aubin K."/>
            <person name="Babbage A.K."/>
            <person name="Bagguley C.L."/>
            <person name="Bailey J."/>
            <person name="Beasley H."/>
            <person name="Bethel G."/>
            <person name="Bird C.P."/>
            <person name="Bray-Allen S."/>
            <person name="Brown J.Y."/>
            <person name="Brown A.J."/>
            <person name="Buckley D."/>
            <person name="Burton J."/>
            <person name="Bye J."/>
            <person name="Carder C."/>
            <person name="Chapman J.C."/>
            <person name="Clark S.Y."/>
            <person name="Clarke G."/>
            <person name="Clee C."/>
            <person name="Cobley V."/>
            <person name="Collier R.E."/>
            <person name="Corby N."/>
            <person name="Coville G.J."/>
            <person name="Davies J."/>
            <person name="Deadman R."/>
            <person name="Dunn M."/>
            <person name="Earthrowl M."/>
            <person name="Ellington A.G."/>
            <person name="Errington H."/>
            <person name="Frankish A."/>
            <person name="Frankland J."/>
            <person name="French L."/>
            <person name="Garner P."/>
            <person name="Garnett J."/>
            <person name="Gay L."/>
            <person name="Ghori M.R.J."/>
            <person name="Gibson R."/>
            <person name="Gilby L.M."/>
            <person name="Gillett W."/>
            <person name="Glithero R.J."/>
            <person name="Grafham D.V."/>
            <person name="Griffiths C."/>
            <person name="Griffiths-Jones S."/>
            <person name="Grocock R."/>
            <person name="Hammond S."/>
            <person name="Harrison E.S.I."/>
            <person name="Hart E."/>
            <person name="Haugen E."/>
            <person name="Heath P.D."/>
            <person name="Holmes S."/>
            <person name="Holt K."/>
            <person name="Howden P.J."/>
            <person name="Hunt A.R."/>
            <person name="Hunt S.E."/>
            <person name="Hunter G."/>
            <person name="Isherwood J."/>
            <person name="James R."/>
            <person name="Johnson C."/>
            <person name="Johnson D."/>
            <person name="Joy A."/>
            <person name="Kay M."/>
            <person name="Kershaw J.K."/>
            <person name="Kibukawa M."/>
            <person name="Kimberley A.M."/>
            <person name="King A."/>
            <person name="Knights A.J."/>
            <person name="Lad H."/>
            <person name="Laird G."/>
            <person name="Lawlor S."/>
            <person name="Leongamornlert D.A."/>
            <person name="Lloyd D.M."/>
            <person name="Loveland J."/>
            <person name="Lovell J."/>
            <person name="Lush M.J."/>
            <person name="Lyne R."/>
            <person name="Martin S."/>
            <person name="Mashreghi-Mohammadi M."/>
            <person name="Matthews L."/>
            <person name="Matthews N.S.W."/>
            <person name="McLaren S."/>
            <person name="Milne S."/>
            <person name="Mistry S."/>
            <person name="Moore M.J.F."/>
            <person name="Nickerson T."/>
            <person name="O'Dell C.N."/>
            <person name="Oliver K."/>
            <person name="Palmeiri A."/>
            <person name="Palmer S.A."/>
            <person name="Parker A."/>
            <person name="Patel D."/>
            <person name="Pearce A.V."/>
            <person name="Peck A.I."/>
            <person name="Pelan S."/>
            <person name="Phelps K."/>
            <person name="Phillimore B.J."/>
            <person name="Plumb R."/>
            <person name="Rajan J."/>
            <person name="Raymond C."/>
            <person name="Rouse G."/>
            <person name="Saenphimmachak C."/>
            <person name="Sehra H.K."/>
            <person name="Sheridan E."/>
            <person name="Shownkeen R."/>
            <person name="Sims S."/>
            <person name="Skuce C.D."/>
            <person name="Smith M."/>
            <person name="Steward C."/>
            <person name="Subramanian S."/>
            <person name="Sycamore N."/>
            <person name="Tracey A."/>
            <person name="Tromans A."/>
            <person name="Van Helmond Z."/>
            <person name="Wall M."/>
            <person name="Wallis J.M."/>
            <person name="White S."/>
            <person name="Whitehead S.L."/>
            <person name="Wilkinson J.E."/>
            <person name="Willey D.L."/>
            <person name="Williams H."/>
            <person name="Wilming L."/>
            <person name="Wray P.W."/>
            <person name="Wu Z."/>
            <person name="Coulson A."/>
            <person name="Vaudin M."/>
            <person name="Sulston J.E."/>
            <person name="Durbin R.M."/>
            <person name="Hubbard T."/>
            <person name="Wooster R."/>
            <person name="Dunham I."/>
            <person name="Carter N.P."/>
            <person name="McVean G."/>
            <person name="Ross M.T."/>
            <person name="Harrow J."/>
            <person name="Olson M.V."/>
            <person name="Beck S."/>
            <person name="Rogers J."/>
            <person name="Bentley D.R."/>
        </authorList>
    </citation>
    <scope>NUCLEOTIDE SEQUENCE [LARGE SCALE GENOMIC DNA] (ISOFORMS 1; 2; 3; 4; 5 AND 6)</scope>
</reference>
<reference key="5">
    <citation type="journal article" date="2004" name="Genome Res.">
        <title>The status, quality, and expansion of the NIH full-length cDNA project: the Mammalian Gene Collection (MGC).</title>
        <authorList>
            <consortium name="The MGC Project Team"/>
        </authorList>
    </citation>
    <scope>NUCLEOTIDE SEQUENCE [LARGE SCALE MRNA] (ISOFORM 1)</scope>
    <source>
        <tissue>Lung</tissue>
    </source>
</reference>
<reference key="6">
    <citation type="journal article" date="2004" name="Protein Sci.">
        <title>Signal peptide prediction based on analysis of experimentally verified cleavage sites.</title>
        <authorList>
            <person name="Zhang Z."/>
            <person name="Henzel W.J."/>
        </authorList>
    </citation>
    <scope>PROTEIN SEQUENCE OF 29-43</scope>
</reference>
<reference key="7">
    <citation type="journal article" date="2003" name="Nat. Neurosci.">
        <title>The netrin-G1 ligand NGL-1 promotes the outgrowth of thalamocortical axons.</title>
        <authorList>
            <person name="Lin J.C."/>
            <person name="Ho W.-H."/>
            <person name="Gurney A.L."/>
            <person name="Rosenthal A."/>
        </authorList>
    </citation>
    <scope>INTERACTION WITH NGL1</scope>
    <scope>TISSUE SPECIFICITY</scope>
</reference>
<reference key="8">
    <citation type="journal article" date="2005" name="Genomics">
        <title>Human netrin-G1 isoforms show evidence of differential expression.</title>
        <authorList>
            <person name="Meerabux J.M."/>
            <person name="Ohba H."/>
            <person name="Fukasawa M."/>
            <person name="Suto Y."/>
            <person name="Aoki-Suzuki M."/>
            <person name="Nakashiba T."/>
            <person name="Nishimura S."/>
            <person name="Itohara S."/>
            <person name="Yoshikawa T."/>
        </authorList>
    </citation>
    <scope>ALTERNATIVE SPLICING (ISOFORMS 1; 3; 4 AND 5)</scope>
    <scope>TISSUE SPECIFICITY</scope>
</reference>
<reference key="9">
    <citation type="journal article" date="2011" name="EMBO J.">
        <title>Structural basis for cell surface patterning through NetrinG-NGL interactions.</title>
        <authorList>
            <person name="Seiradake E."/>
            <person name="Coles C.H."/>
            <person name="Perestenko P.V."/>
            <person name="Harlos K."/>
            <person name="McIlhinney R.A."/>
            <person name="Aricescu A.R."/>
            <person name="Jones E.Y."/>
        </authorList>
    </citation>
    <scope>X-RAY CRYSTALLOGRAPHY (3.25 ANGSTROMS) OF 1-520 IN COMPLEX WITH LRRC4C/NGL1</scope>
    <scope>FUNCTION</scope>
    <scope>SUBCELLULAR LOCATION</scope>
</reference>
<gene>
    <name type="primary">NTNG1</name>
    <name type="synonym">KIAA0976</name>
    <name type="synonym">LMNT1</name>
    <name type="ORF">UNQ571/PRO1133</name>
</gene>
<proteinExistence type="evidence at protein level"/>
<comment type="function">
    <text evidence="9">Involved in controlling patterning and neuronal circuit formation at the laminar, cellular, subcellular and synaptic levels. Promotes neurite outgrowth of both axons and dendrites.</text>
</comment>
<comment type="subunit">
    <text evidence="6 9">Interacts with NGL1.</text>
</comment>
<comment type="interaction">
    <interactant intactId="EBI-7444396">
        <id>Q9Y2I2</id>
    </interactant>
    <interactant intactId="EBI-7444327">
        <id>Q9HBW1</id>
        <label>LRRC4</label>
    </interactant>
    <organismsDiffer>false</organismsDiffer>
    <experiments>2</experiments>
</comment>
<comment type="interaction">
    <interactant intactId="EBI-7444396">
        <id>Q9Y2I2</id>
    </interactant>
    <interactant intactId="EBI-3925442">
        <id>Q9HCJ2</id>
        <label>LRRC4C</label>
    </interactant>
    <organismsDiffer>false</organismsDiffer>
    <experiments>4</experiments>
</comment>
<comment type="interaction">
    <interactant intactId="EBI-7444396">
        <id>Q9Y2I2</id>
    </interactant>
    <interactant intactId="EBI-2949792">
        <id>Q9BRJ7</id>
        <label>NUDT16L1</label>
    </interactant>
    <organismsDiffer>false</organismsDiffer>
    <experiments>2</experiments>
</comment>
<comment type="subcellular location">
    <subcellularLocation>
        <location evidence="9">Cell membrane</location>
        <topology evidence="9">Lipid-anchor</topology>
        <topology evidence="9">GPI-anchor</topology>
        <orientation evidence="9">Extracellular side</orientation>
    </subcellularLocation>
</comment>
<comment type="alternative products">
    <event type="alternative splicing"/>
    <isoform>
        <id>Q9Y2I2-3</id>
        <name>3</name>
        <name>1A</name>
        <sequence type="displayed"/>
    </isoform>
    <isoform>
        <id>Q9Y2I2-2</id>
        <name>2</name>
        <name>1F</name>
        <sequence type="described" ref="VSP_010429 VSP_010430"/>
    </isoform>
    <isoform>
        <id>Q9Y2I2-1</id>
        <name>1</name>
        <name>1C</name>
        <sequence type="described" ref="VSP_012574 VSP_012579"/>
    </isoform>
    <isoform>
        <id>Q9Y2I2-4</id>
        <name>4</name>
        <name>1D</name>
        <sequence type="described" ref="VSP_012575"/>
    </isoform>
    <isoform>
        <id>Q9Y2I2-5</id>
        <name>5</name>
        <name>1E</name>
        <sequence type="described" ref="VSP_012576 VSP_012577"/>
    </isoform>
    <isoform>
        <id>Q9Y2I2-6</id>
        <name>6</name>
        <name>1G</name>
        <sequence type="described" ref="VSP_012578 VSP_012580"/>
    </isoform>
</comment>
<comment type="tissue specificity">
    <text evidence="6 8">Highly expressed in the thalamus, with very low expression, if any, in other tissues.</text>
</comment>
<comment type="domain">
    <text>The laminin N-terminal domain mediates 1:1 binding to NGL ligand with sub-micromolar affinity. Three NGL-binding loops mediate discrimination for LRRC4C/NGL1 among other NGLs by binding specifically to its LRR repeats. This specificity drives the sorting of a mixed population of molecules into discrete cell surface subdomains.</text>
</comment>
<comment type="PTM">
    <text evidence="2">N-glycosylated.</text>
</comment>
<comment type="miscellaneous">
    <molecule>Isoform 3</molecule>
    <text>Mostly expressed in adult brain.</text>
</comment>
<comment type="miscellaneous">
    <molecule>Isoform 1</molecule>
    <text evidence="14">Hi expression in Expressed in brain and.</text>
</comment>
<comment type="miscellaneous">
    <molecule>Isoform 4</molecule>
    <text evidence="14">Mostly expressed in kidney, also expressed in adult and fetal brain.</text>
</comment>
<comment type="miscellaneous">
    <molecule>Isoform 5</molecule>
    <text evidence="14">Some expression in fetal brain.</text>
</comment>
<comment type="sequence caution" evidence="14">
    <conflict type="erroneous initiation">
        <sequence resource="EMBL-CDS" id="BAA76820"/>
    </conflict>
    <text>Extended N-terminus.</text>
</comment>
<protein>
    <recommendedName>
        <fullName>Netrin-G1</fullName>
    </recommendedName>
    <alternativeName>
        <fullName>Laminet-1</fullName>
    </alternativeName>
</protein>
<evidence type="ECO:0000250" key="1"/>
<evidence type="ECO:0000250" key="2">
    <source>
        <dbReference type="UniProtKB" id="Q8R4G0"/>
    </source>
</evidence>
<evidence type="ECO:0000255" key="3"/>
<evidence type="ECO:0000255" key="4">
    <source>
        <dbReference type="PROSITE-ProRule" id="PRU00460"/>
    </source>
</evidence>
<evidence type="ECO:0000255" key="5">
    <source>
        <dbReference type="PROSITE-ProRule" id="PRU00466"/>
    </source>
</evidence>
<evidence type="ECO:0000269" key="6">
    <source>
    </source>
</evidence>
<evidence type="ECO:0000269" key="7">
    <source>
    </source>
</evidence>
<evidence type="ECO:0000269" key="8">
    <source>
    </source>
</evidence>
<evidence type="ECO:0000269" key="9">
    <source>
    </source>
</evidence>
<evidence type="ECO:0000303" key="10">
    <source>
    </source>
</evidence>
<evidence type="ECO:0000303" key="11">
    <source>
    </source>
</evidence>
<evidence type="ECO:0000303" key="12">
    <source>
    </source>
</evidence>
<evidence type="ECO:0000303" key="13">
    <source>
    </source>
</evidence>
<evidence type="ECO:0000305" key="14"/>
<evidence type="ECO:0007829" key="15">
    <source>
        <dbReference type="PDB" id="3ZYJ"/>
    </source>
</evidence>
<accession>Q9Y2I2</accession>
<accession>Q5VU86</accession>
<accession>Q5VU87</accession>
<accession>Q5VU89</accession>
<accession>Q5VU90</accession>
<accession>Q5VU91</accession>
<accession>Q7Z2Y3</accession>
<accession>Q8N633</accession>
<sequence length="539" mass="60541">MYLSRFLSIHALWVTVSSVMQPYPLVWGHYDLCKTQIYTEEGKVWDYMACQPESTDMTKYLKVKLDPPDITCGDPPETFCAMGNPYMCNNECDASTPELAHPPELMFDFEGRHPSTFWQSATWKEYPKPLQVNITLSWSKTIELTDNIVITFESGRPDQMILEKSLDYGRTWQPYQYYATDCLDAFHMDPKSVKDLSQHTVLEIICTEEYSTGYTTNSKIIHFEIKDRFAFFAGPRLRNMASLYGQLDTTKKLRDFFTVTDLRIRLLRPAVGEIFVDELHLARYFYAISDIKVRGRCKCNLHATVCVYDNSKLTCECEHNTTGPDCGKCKKNYQGRPWSPGSYLPIPKGTANTCIPSISSIGNCECFGHSNRCSYIDLLNTVICVSCKHNTRGQHCELCRLGYFRNASAQLDDENVCIECYCNPLGSIHDRCNGSGFCECKTGTTGPKCDECLPGNSWHYGCQPNVCDNELLHCQNGGTCHNNVRCLCPAAYTGILCEKLRCEEAGSCGSDSGQGAPPHGSPALLLLTTLLGTASPLVF</sequence>
<feature type="signal peptide" evidence="7">
    <location>
        <begin position="1"/>
        <end position="28"/>
    </location>
</feature>
<feature type="chain" id="PRO_0000017091" description="Netrin-G1">
    <location>
        <begin position="29"/>
        <end position="510"/>
    </location>
</feature>
<feature type="propeptide" id="PRO_0000017092" description="Removed in mature form" evidence="3">
    <location>
        <begin position="511"/>
        <end position="539"/>
    </location>
</feature>
<feature type="domain" description="Laminin N-terminal" evidence="5">
    <location>
        <begin position="46"/>
        <end position="296"/>
    </location>
</feature>
<feature type="domain" description="Laminin EGF-like 1" evidence="4">
    <location>
        <begin position="297"/>
        <end position="356"/>
    </location>
</feature>
<feature type="domain" description="Laminin EGF-like 2" evidence="4">
    <location>
        <begin position="364"/>
        <end position="419"/>
    </location>
</feature>
<feature type="domain" description="Laminin EGF-like 3" evidence="4">
    <location>
        <begin position="420"/>
        <end position="469"/>
    </location>
</feature>
<feature type="region of interest" description="NGL discriminant loop I">
    <location>
        <begin position="80"/>
        <end position="91"/>
    </location>
</feature>
<feature type="region of interest" description="NGL discriminant loop II">
    <location>
        <begin position="208"/>
        <end position="214"/>
    </location>
</feature>
<feature type="region of interest" description="NGL discriminant loop III">
    <location>
        <begin position="273"/>
        <end position="275"/>
    </location>
</feature>
<feature type="lipid moiety-binding region" description="GPI-anchor amidated serine" evidence="3">
    <location>
        <position position="510"/>
    </location>
</feature>
<feature type="glycosylation site" description="N-linked (GlcNAc...) asparagine" evidence="3">
    <location>
        <position position="133"/>
    </location>
</feature>
<feature type="glycosylation site" description="N-linked (GlcNAc...) asparagine" evidence="3">
    <location>
        <position position="320"/>
    </location>
</feature>
<feature type="glycosylation site" description="N-linked (GlcNAc...) asparagine" evidence="3">
    <location>
        <position position="406"/>
    </location>
</feature>
<feature type="glycosylation site" description="N-linked (GlcNAc...) asparagine" evidence="3">
    <location>
        <position position="433"/>
    </location>
</feature>
<feature type="disulfide bond" evidence="1">
    <location>
        <begin position="33"/>
        <end position="50"/>
    </location>
</feature>
<feature type="disulfide bond" evidence="1">
    <location>
        <begin position="72"/>
        <end position="92"/>
    </location>
</feature>
<feature type="disulfide bond">
    <location>
        <begin position="80"/>
        <end position="88"/>
    </location>
</feature>
<feature type="disulfide bond" evidence="1">
    <location>
        <begin position="182"/>
        <end position="206"/>
    </location>
</feature>
<feature type="disulfide bond" evidence="1">
    <location>
        <begin position="297"/>
        <end position="306"/>
    </location>
</feature>
<feature type="disulfide bond" evidence="1">
    <location>
        <begin position="299"/>
        <end position="315"/>
    </location>
</feature>
<feature type="disulfide bond" evidence="1">
    <location>
        <begin position="317"/>
        <end position="326"/>
    </location>
</feature>
<feature type="disulfide bond" evidence="1">
    <location>
        <begin position="329"/>
        <end position="354"/>
    </location>
</feature>
<feature type="disulfide bond" evidence="1">
    <location>
        <begin position="364"/>
        <end position="373"/>
    </location>
</feature>
<feature type="disulfide bond" evidence="1">
    <location>
        <begin position="366"/>
        <end position="384"/>
    </location>
</feature>
<feature type="disulfide bond" evidence="1">
    <location>
        <begin position="387"/>
        <end position="396"/>
    </location>
</feature>
<feature type="disulfide bond" evidence="1">
    <location>
        <begin position="399"/>
        <end position="417"/>
    </location>
</feature>
<feature type="disulfide bond" evidence="1">
    <location>
        <begin position="420"/>
        <end position="432"/>
    </location>
</feature>
<feature type="disulfide bond" evidence="1">
    <location>
        <begin position="422"/>
        <end position="438"/>
    </location>
</feature>
<feature type="disulfide bond" evidence="1">
    <location>
        <begin position="440"/>
        <end position="449"/>
    </location>
</feature>
<feature type="disulfide bond" evidence="1">
    <location>
        <begin position="452"/>
        <end position="462"/>
    </location>
</feature>
<feature type="disulfide bond" evidence="1">
    <location>
        <begin position="467"/>
        <end position="480"/>
    </location>
</feature>
<feature type="disulfide bond" evidence="1">
    <location>
        <begin position="474"/>
        <end position="486"/>
    </location>
</feature>
<feature type="disulfide bond" evidence="1">
    <location>
        <begin position="488"/>
        <end position="497"/>
    </location>
</feature>
<feature type="splice variant" id="VSP_012574" description="In isoform 1." evidence="11 12">
    <location>
        <begin position="363"/>
        <end position="463"/>
    </location>
</feature>
<feature type="splice variant" id="VSP_010429" description="In isoform 2." evidence="10 13">
    <original>NC</original>
    <variation>SK</variation>
    <location>
        <begin position="363"/>
        <end position="364"/>
    </location>
</feature>
<feature type="splice variant" id="VSP_012575" description="In isoform 4." evidence="14">
    <original>CECFGHSNRCSYIDLLNTVICVSCKHNTRGQHCELCRLGYFRNASAQLDDENVCIECYCNPLGSIHDRCNGSGFCECKTGTTGPKCDECLPGNSWHYGCQP</original>
    <variation>PPKFNRIWPNISSLEVSNPKQVAPKLALSTVSSVQVANHKRA</variation>
    <location>
        <begin position="364"/>
        <end position="464"/>
    </location>
</feature>
<feature type="splice variant" id="VSP_012576" description="In isoform 5." evidence="14">
    <original>CECFGHSNRCSYIDLLNTVICV</original>
    <variation>PPKFNRIWPNISSLEVSNPKQA</variation>
    <location>
        <begin position="364"/>
        <end position="385"/>
    </location>
</feature>
<feature type="splice variant" id="VSP_010430" description="In isoform 2." evidence="10 13">
    <location>
        <begin position="365"/>
        <end position="539"/>
    </location>
</feature>
<feature type="splice variant" id="VSP_012577" description="In isoform 5." evidence="14">
    <location>
        <begin position="386"/>
        <end position="464"/>
    </location>
</feature>
<feature type="splice variant" id="VSP_012578" description="In isoform 6." evidence="14">
    <location>
        <begin position="419"/>
        <end position="463"/>
    </location>
</feature>
<feature type="splice variant" id="VSP_012579" description="In isoform 1." evidence="11 12">
    <original>P</original>
    <variation>T</variation>
    <location>
        <position position="464"/>
    </location>
</feature>
<feature type="splice variant" id="VSP_012580" description="In isoform 6." evidence="14">
    <original>P</original>
    <variation>A</variation>
    <location>
        <position position="464"/>
    </location>
</feature>
<feature type="sequence conflict" description="In Ref. 2; AAQ88731." evidence="14" ref="2">
    <original>F</original>
    <variation>S</variation>
    <location>
        <position position="6"/>
    </location>
</feature>
<feature type="sequence conflict" description="In Ref. 2; AAQ88731." evidence="14" ref="2">
    <original>F</original>
    <variation>L</variation>
    <location>
        <position position="231"/>
    </location>
</feature>
<feature type="sequence conflict" description="In Ref. 2; AAQ88731." evidence="14" ref="2">
    <original>S</original>
    <variation>T</variation>
    <location>
        <position position="521"/>
    </location>
</feature>
<feature type="strand" evidence="15">
    <location>
        <begin position="33"/>
        <end position="36"/>
    </location>
</feature>
<feature type="strand" evidence="15">
    <location>
        <begin position="45"/>
        <end position="48"/>
    </location>
</feature>
<feature type="helix" evidence="15">
    <location>
        <begin position="57"/>
        <end position="59"/>
    </location>
</feature>
<feature type="strand" evidence="15">
    <location>
        <begin position="62"/>
        <end position="67"/>
    </location>
</feature>
<feature type="helix" evidence="15">
    <location>
        <begin position="68"/>
        <end position="70"/>
    </location>
</feature>
<feature type="strand" evidence="15">
    <location>
        <begin position="94"/>
        <end position="96"/>
    </location>
</feature>
<feature type="turn" evidence="15">
    <location>
        <begin position="97"/>
        <end position="99"/>
    </location>
</feature>
<feature type="helix" evidence="15">
    <location>
        <begin position="103"/>
        <end position="107"/>
    </location>
</feature>
<feature type="strand" evidence="15">
    <location>
        <begin position="118"/>
        <end position="120"/>
    </location>
</feature>
<feature type="strand" evidence="15">
    <location>
        <begin position="132"/>
        <end position="144"/>
    </location>
</feature>
<feature type="strand" evidence="15">
    <location>
        <begin position="148"/>
        <end position="154"/>
    </location>
</feature>
<feature type="strand" evidence="15">
    <location>
        <begin position="158"/>
        <end position="167"/>
    </location>
</feature>
<feature type="strand" evidence="15">
    <location>
        <begin position="173"/>
        <end position="181"/>
    </location>
</feature>
<feature type="helix" evidence="15">
    <location>
        <begin position="182"/>
        <end position="185"/>
    </location>
</feature>
<feature type="helix" evidence="15">
    <location>
        <begin position="193"/>
        <end position="195"/>
    </location>
</feature>
<feature type="turn" evidence="15">
    <location>
        <begin position="209"/>
        <end position="211"/>
    </location>
</feature>
<feature type="strand" evidence="15">
    <location>
        <begin position="213"/>
        <end position="215"/>
    </location>
</feature>
<feature type="turn" evidence="15">
    <location>
        <begin position="216"/>
        <end position="219"/>
    </location>
</feature>
<feature type="strand" evidence="15">
    <location>
        <begin position="220"/>
        <end position="223"/>
    </location>
</feature>
<feature type="helix" evidence="15">
    <location>
        <begin position="226"/>
        <end position="233"/>
    </location>
</feature>
<feature type="helix" evidence="15">
    <location>
        <begin position="240"/>
        <end position="249"/>
    </location>
</feature>
<feature type="helix" evidence="15">
    <location>
        <begin position="251"/>
        <end position="256"/>
    </location>
</feature>
<feature type="strand" evidence="15">
    <location>
        <begin position="257"/>
        <end position="268"/>
    </location>
</feature>
<feature type="strand" evidence="15">
    <location>
        <begin position="272"/>
        <end position="275"/>
    </location>
</feature>
<feature type="helix" evidence="15">
    <location>
        <begin position="281"/>
        <end position="283"/>
    </location>
</feature>
<feature type="strand" evidence="15">
    <location>
        <begin position="287"/>
        <end position="292"/>
    </location>
</feature>
<feature type="strand" evidence="15">
    <location>
        <begin position="294"/>
        <end position="297"/>
    </location>
</feature>
<feature type="strand" evidence="15">
    <location>
        <begin position="300"/>
        <end position="302"/>
    </location>
</feature>
<feature type="strand" evidence="15">
    <location>
        <begin position="306"/>
        <end position="309"/>
    </location>
</feature>
<feature type="strand" evidence="15">
    <location>
        <begin position="312"/>
        <end position="315"/>
    </location>
</feature>
<feature type="strand" evidence="15">
    <location>
        <begin position="321"/>
        <end position="326"/>
    </location>
</feature>
<feature type="strand" evidence="15">
    <location>
        <begin position="345"/>
        <end position="348"/>
    </location>
</feature>
<feature type="sequence conflict" description="In Ref. 3; CAD98143." evidence="14" ref="3">
    <original>K</original>
    <variation>KQ</variation>
    <location sequence="Q9Y2I2-2">
        <position position="364"/>
    </location>
</feature>
<dbReference type="EMBL" id="AB023193">
    <property type="protein sequence ID" value="BAA76820.2"/>
    <property type="status" value="ALT_INIT"/>
    <property type="molecule type" value="mRNA"/>
</dbReference>
<dbReference type="EMBL" id="AY358365">
    <property type="protein sequence ID" value="AAQ88731.1"/>
    <property type="molecule type" value="mRNA"/>
</dbReference>
<dbReference type="EMBL" id="BX538348">
    <property type="protein sequence ID" value="CAD98143.1"/>
    <property type="molecule type" value="mRNA"/>
</dbReference>
<dbReference type="EMBL" id="AC114491">
    <property type="status" value="NOT_ANNOTATED_CDS"/>
    <property type="molecule type" value="Genomic_DNA"/>
</dbReference>
<dbReference type="EMBL" id="AL513187">
    <property type="status" value="NOT_ANNOTATED_CDS"/>
    <property type="molecule type" value="Genomic_DNA"/>
</dbReference>
<dbReference type="EMBL" id="AL590427">
    <property type="status" value="NOT_ANNOTATED_CDS"/>
    <property type="molecule type" value="Genomic_DNA"/>
</dbReference>
<dbReference type="EMBL" id="BC030220">
    <property type="protein sequence ID" value="AAH30220.1"/>
    <property type="molecule type" value="mRNA"/>
</dbReference>
<dbReference type="CCDS" id="CCDS30785.1">
    <molecule id="Q9Y2I2-1"/>
</dbReference>
<dbReference type="CCDS" id="CCDS44179.1">
    <molecule id="Q9Y2I2-4"/>
</dbReference>
<dbReference type="CCDS" id="CCDS44180.1">
    <molecule id="Q9Y2I2-3"/>
</dbReference>
<dbReference type="CCDS" id="CCDS81354.1">
    <molecule id="Q9Y2I2-5"/>
</dbReference>
<dbReference type="RefSeq" id="NP_001106697.1">
    <molecule id="Q9Y2I2-3"/>
    <property type="nucleotide sequence ID" value="NM_001113226.3"/>
</dbReference>
<dbReference type="RefSeq" id="NP_001106699.1">
    <molecule id="Q9Y2I2-4"/>
    <property type="nucleotide sequence ID" value="NM_001113228.3"/>
</dbReference>
<dbReference type="RefSeq" id="NP_001317594.1">
    <molecule id="Q9Y2I2-5"/>
    <property type="nucleotide sequence ID" value="NM_001330665.2"/>
</dbReference>
<dbReference type="RefSeq" id="NP_001359096.1">
    <molecule id="Q9Y2I2-3"/>
    <property type="nucleotide sequence ID" value="NM_001372167.1"/>
</dbReference>
<dbReference type="RefSeq" id="NP_001359097.1">
    <molecule id="Q9Y2I2-1"/>
    <property type="nucleotide sequence ID" value="NM_001372168.1"/>
</dbReference>
<dbReference type="RefSeq" id="NP_001359098.1">
    <molecule id="Q9Y2I2-4"/>
    <property type="nucleotide sequence ID" value="NM_001372169.1"/>
</dbReference>
<dbReference type="RefSeq" id="NP_001359099.1">
    <molecule id="Q9Y2I2-3"/>
    <property type="nucleotide sequence ID" value="NM_001372170.1"/>
</dbReference>
<dbReference type="RefSeq" id="NP_001359100.1">
    <molecule id="Q9Y2I2-1"/>
    <property type="nucleotide sequence ID" value="NM_001372171.1"/>
</dbReference>
<dbReference type="RefSeq" id="NP_055732.2">
    <molecule id="Q9Y2I2-1"/>
    <property type="nucleotide sequence ID" value="NM_014917.3"/>
</dbReference>
<dbReference type="RefSeq" id="XP_006710519.1">
    <property type="nucleotide sequence ID" value="XM_006710456.3"/>
</dbReference>
<dbReference type="RefSeq" id="XP_011539323.1">
    <property type="nucleotide sequence ID" value="XM_011541021.1"/>
</dbReference>
<dbReference type="RefSeq" id="XP_016856169.1">
    <property type="nucleotide sequence ID" value="XM_017000680.1"/>
</dbReference>
<dbReference type="RefSeq" id="XP_016856170.1">
    <property type="nucleotide sequence ID" value="XM_017000681.1"/>
</dbReference>
<dbReference type="RefSeq" id="XP_016856172.1">
    <molecule id="Q9Y2I2-4"/>
    <property type="nucleotide sequence ID" value="XM_017000683.3"/>
</dbReference>
<dbReference type="RefSeq" id="XP_016856174.1">
    <property type="nucleotide sequence ID" value="XM_017000685.1"/>
</dbReference>
<dbReference type="RefSeq" id="XP_016856175.1">
    <molecule id="Q9Y2I2-2"/>
    <property type="nucleotide sequence ID" value="XM_017000686.3"/>
</dbReference>
<dbReference type="RefSeq" id="XP_047305402.1">
    <molecule id="Q9Y2I2-3"/>
    <property type="nucleotide sequence ID" value="XM_047449446.1"/>
</dbReference>
<dbReference type="RefSeq" id="XP_047305405.1">
    <molecule id="Q9Y2I2-5"/>
    <property type="nucleotide sequence ID" value="XM_047449449.1"/>
</dbReference>
<dbReference type="RefSeq" id="XP_054191117.1">
    <molecule id="Q9Y2I2-3"/>
    <property type="nucleotide sequence ID" value="XM_054335142.1"/>
</dbReference>
<dbReference type="RefSeq" id="XP_054191120.1">
    <molecule id="Q9Y2I2-4"/>
    <property type="nucleotide sequence ID" value="XM_054335145.1"/>
</dbReference>
<dbReference type="RefSeq" id="XP_054191121.1">
    <molecule id="Q9Y2I2-5"/>
    <property type="nucleotide sequence ID" value="XM_054335146.1"/>
</dbReference>
<dbReference type="PDB" id="3ZYJ">
    <property type="method" value="X-ray"/>
    <property type="resolution" value="3.25 A"/>
    <property type="chains" value="B/D=1-520"/>
</dbReference>
<dbReference type="PDBsum" id="3ZYJ"/>
<dbReference type="SMR" id="Q9Y2I2"/>
<dbReference type="BioGRID" id="116525">
    <property type="interactions" value="129"/>
</dbReference>
<dbReference type="FunCoup" id="Q9Y2I2">
    <property type="interactions" value="603"/>
</dbReference>
<dbReference type="IntAct" id="Q9Y2I2">
    <property type="interactions" value="103"/>
</dbReference>
<dbReference type="MINT" id="Q9Y2I2"/>
<dbReference type="STRING" id="9606.ENSP00000359085"/>
<dbReference type="GlyCosmos" id="Q9Y2I2">
    <property type="glycosylation" value="4 sites, No reported glycans"/>
</dbReference>
<dbReference type="GlyGen" id="Q9Y2I2">
    <property type="glycosylation" value="4 sites, 2 N-linked glycans (1 site)"/>
</dbReference>
<dbReference type="iPTMnet" id="Q9Y2I2"/>
<dbReference type="PhosphoSitePlus" id="Q9Y2I2"/>
<dbReference type="BioMuta" id="NTNG1"/>
<dbReference type="DMDM" id="57015420"/>
<dbReference type="MassIVE" id="Q9Y2I2"/>
<dbReference type="PaxDb" id="9606-ENSP00000359085"/>
<dbReference type="PeptideAtlas" id="Q9Y2I2"/>
<dbReference type="ProteomicsDB" id="85793">
    <molecule id="Q9Y2I2-3"/>
</dbReference>
<dbReference type="ProteomicsDB" id="85794">
    <molecule id="Q9Y2I2-1"/>
</dbReference>
<dbReference type="ProteomicsDB" id="85795">
    <molecule id="Q9Y2I2-2"/>
</dbReference>
<dbReference type="ProteomicsDB" id="85796">
    <molecule id="Q9Y2I2-4"/>
</dbReference>
<dbReference type="ProteomicsDB" id="85797">
    <molecule id="Q9Y2I2-5"/>
</dbReference>
<dbReference type="ProteomicsDB" id="85798">
    <molecule id="Q9Y2I2-6"/>
</dbReference>
<dbReference type="Antibodypedia" id="33720">
    <property type="antibodies" value="160 antibodies from 29 providers"/>
</dbReference>
<dbReference type="DNASU" id="22854"/>
<dbReference type="Ensembl" id="ENST00000370065.1">
    <molecule id="Q9Y2I2-6"/>
    <property type="protein sequence ID" value="ENSP00000359082.1"/>
    <property type="gene ID" value="ENSG00000162631.20"/>
</dbReference>
<dbReference type="Ensembl" id="ENST00000370066.5">
    <molecule id="Q9Y2I2-4"/>
    <property type="protein sequence ID" value="ENSP00000359083.1"/>
    <property type="gene ID" value="ENSG00000162631.20"/>
</dbReference>
<dbReference type="Ensembl" id="ENST00000370067.5">
    <molecule id="Q9Y2I2-5"/>
    <property type="protein sequence ID" value="ENSP00000359084.1"/>
    <property type="gene ID" value="ENSG00000162631.20"/>
</dbReference>
<dbReference type="Ensembl" id="ENST00000370068.6">
    <molecule id="Q9Y2I2-3"/>
    <property type="protein sequence ID" value="ENSP00000359085.1"/>
    <property type="gene ID" value="ENSG00000162631.20"/>
</dbReference>
<dbReference type="Ensembl" id="ENST00000370073.6">
    <molecule id="Q9Y2I2-3"/>
    <property type="protein sequence ID" value="ENSP00000359090.2"/>
    <property type="gene ID" value="ENSG00000162631.20"/>
</dbReference>
<dbReference type="Ensembl" id="ENST00000370074.8">
    <molecule id="Q9Y2I2-1"/>
    <property type="protein sequence ID" value="ENSP00000359091.3"/>
    <property type="gene ID" value="ENSG00000162631.20"/>
</dbReference>
<dbReference type="GeneID" id="22854"/>
<dbReference type="KEGG" id="hsa:22854"/>
<dbReference type="MANE-Select" id="ENST00000370068.6">
    <property type="protein sequence ID" value="ENSP00000359085.1"/>
    <property type="RefSeq nucleotide sequence ID" value="NM_001113226.3"/>
    <property type="RefSeq protein sequence ID" value="NP_001106697.1"/>
</dbReference>
<dbReference type="UCSC" id="uc001dvc.4">
    <molecule id="Q9Y2I2-3"/>
    <property type="organism name" value="human"/>
</dbReference>
<dbReference type="AGR" id="HGNC:23319"/>
<dbReference type="CTD" id="22854"/>
<dbReference type="DisGeNET" id="22854"/>
<dbReference type="GeneCards" id="NTNG1"/>
<dbReference type="HGNC" id="HGNC:23319">
    <property type="gene designation" value="NTNG1"/>
</dbReference>
<dbReference type="HPA" id="ENSG00000162631">
    <property type="expression patterns" value="Tissue enhanced (kidney, retina)"/>
</dbReference>
<dbReference type="MalaCards" id="NTNG1"/>
<dbReference type="MIM" id="608818">
    <property type="type" value="gene"/>
</dbReference>
<dbReference type="neXtProt" id="NX_Q9Y2I2"/>
<dbReference type="OpenTargets" id="ENSG00000162631"/>
<dbReference type="Orphanet" id="3095">
    <property type="disease" value="Atypical Rett syndrome"/>
</dbReference>
<dbReference type="Orphanet" id="528084">
    <property type="disease" value="Non-specific syndromic intellectual disability"/>
</dbReference>
<dbReference type="PharmGKB" id="PA164742200"/>
<dbReference type="VEuPathDB" id="HostDB:ENSG00000162631"/>
<dbReference type="eggNOG" id="KOG1836">
    <property type="taxonomic scope" value="Eukaryota"/>
</dbReference>
<dbReference type="eggNOG" id="KOG3512">
    <property type="taxonomic scope" value="Eukaryota"/>
</dbReference>
<dbReference type="GeneTree" id="ENSGT00940000153601"/>
<dbReference type="HOGENOM" id="CLU_039838_1_1_1"/>
<dbReference type="InParanoid" id="Q9Y2I2"/>
<dbReference type="OMA" id="AHPTELM"/>
<dbReference type="OrthoDB" id="9981301at2759"/>
<dbReference type="PAN-GO" id="Q9Y2I2">
    <property type="GO annotations" value="7 GO annotations based on evolutionary models"/>
</dbReference>
<dbReference type="PhylomeDB" id="Q9Y2I2"/>
<dbReference type="TreeFam" id="TF333945"/>
<dbReference type="PathwayCommons" id="Q9Y2I2"/>
<dbReference type="Reactome" id="R-HSA-163125">
    <property type="pathway name" value="Post-translational modification: synthesis of GPI-anchored proteins"/>
</dbReference>
<dbReference type="SignaLink" id="Q9Y2I2"/>
<dbReference type="SIGNOR" id="Q9Y2I2"/>
<dbReference type="BioGRID-ORCS" id="22854">
    <property type="hits" value="15 hits in 1153 CRISPR screens"/>
</dbReference>
<dbReference type="CD-CODE" id="91857CE7">
    <property type="entry name" value="Nucleolus"/>
</dbReference>
<dbReference type="ChiTaRS" id="NTNG1">
    <property type="organism name" value="human"/>
</dbReference>
<dbReference type="EvolutionaryTrace" id="Q9Y2I2"/>
<dbReference type="GeneWiki" id="NTNG1"/>
<dbReference type="GenomeRNAi" id="22854"/>
<dbReference type="Pharos" id="Q9Y2I2">
    <property type="development level" value="Tbio"/>
</dbReference>
<dbReference type="PRO" id="PR:Q9Y2I2"/>
<dbReference type="Proteomes" id="UP000005640">
    <property type="component" value="Chromosome 1"/>
</dbReference>
<dbReference type="RNAct" id="Q9Y2I2">
    <property type="molecule type" value="protein"/>
</dbReference>
<dbReference type="Bgee" id="ENSG00000162631">
    <property type="expression patterns" value="Expressed in lateral nuclear group of thalamus and 147 other cell types or tissues"/>
</dbReference>
<dbReference type="ExpressionAtlas" id="Q9Y2I2">
    <property type="expression patterns" value="baseline and differential"/>
</dbReference>
<dbReference type="GO" id="GO:0005576">
    <property type="term" value="C:extracellular region"/>
    <property type="evidence" value="ECO:0000304"/>
    <property type="project" value="Reactome"/>
</dbReference>
<dbReference type="GO" id="GO:0098978">
    <property type="term" value="C:glutamatergic synapse"/>
    <property type="evidence" value="ECO:0007669"/>
    <property type="project" value="Ensembl"/>
</dbReference>
<dbReference type="GO" id="GO:0005886">
    <property type="term" value="C:plasma membrane"/>
    <property type="evidence" value="ECO:0000314"/>
    <property type="project" value="HPA"/>
</dbReference>
<dbReference type="GO" id="GO:0048787">
    <property type="term" value="C:presynaptic active zone membrane"/>
    <property type="evidence" value="ECO:0007669"/>
    <property type="project" value="Ensembl"/>
</dbReference>
<dbReference type="GO" id="GO:0098685">
    <property type="term" value="C:Schaffer collateral - CA1 synapse"/>
    <property type="evidence" value="ECO:0007669"/>
    <property type="project" value="Ensembl"/>
</dbReference>
<dbReference type="GO" id="GO:0098552">
    <property type="term" value="C:side of membrane"/>
    <property type="evidence" value="ECO:0007669"/>
    <property type="project" value="UniProtKB-KW"/>
</dbReference>
<dbReference type="GO" id="GO:0050839">
    <property type="term" value="F:cell adhesion molecule binding"/>
    <property type="evidence" value="ECO:0000353"/>
    <property type="project" value="SynGO-UCL"/>
</dbReference>
<dbReference type="GO" id="GO:0098632">
    <property type="term" value="F:cell-cell adhesion mediator activity"/>
    <property type="evidence" value="ECO:0000316"/>
    <property type="project" value="SynGO-UCL"/>
</dbReference>
<dbReference type="GO" id="GO:0007409">
    <property type="term" value="P:axonogenesis"/>
    <property type="evidence" value="ECO:0000250"/>
    <property type="project" value="UniProtKB"/>
</dbReference>
<dbReference type="GO" id="GO:0050804">
    <property type="term" value="P:modulation of chemical synaptic transmission"/>
    <property type="evidence" value="ECO:0007669"/>
    <property type="project" value="Ensembl"/>
</dbReference>
<dbReference type="GO" id="GO:2001222">
    <property type="term" value="P:regulation of neuron migration"/>
    <property type="evidence" value="ECO:0000250"/>
    <property type="project" value="UniProtKB"/>
</dbReference>
<dbReference type="GO" id="GO:0150011">
    <property type="term" value="P:regulation of neuron projection arborization"/>
    <property type="evidence" value="ECO:0000250"/>
    <property type="project" value="UniProtKB"/>
</dbReference>
<dbReference type="GO" id="GO:0010975">
    <property type="term" value="P:regulation of neuron projection development"/>
    <property type="evidence" value="ECO:0000250"/>
    <property type="project" value="UniProtKB"/>
</dbReference>
<dbReference type="GO" id="GO:0099560">
    <property type="term" value="P:synaptic membrane adhesion"/>
    <property type="evidence" value="ECO:0000316"/>
    <property type="project" value="SynGO-UCL"/>
</dbReference>
<dbReference type="CDD" id="cd00054">
    <property type="entry name" value="EGF_CA"/>
    <property type="match status" value="1"/>
</dbReference>
<dbReference type="CDD" id="cd00055">
    <property type="entry name" value="EGF_Lam"/>
    <property type="match status" value="3"/>
</dbReference>
<dbReference type="FunFam" id="2.10.25.10:FF:000085">
    <property type="entry name" value="Netrin G1"/>
    <property type="match status" value="1"/>
</dbReference>
<dbReference type="FunFam" id="2.10.25.10:FF:000112">
    <property type="entry name" value="Netrin G1"/>
    <property type="match status" value="1"/>
</dbReference>
<dbReference type="FunFam" id="2.10.25.10:FF:000502">
    <property type="entry name" value="Netrin G1"/>
    <property type="match status" value="1"/>
</dbReference>
<dbReference type="FunFam" id="2.60.120.260:FF:000005">
    <property type="entry name" value="Netrin G1"/>
    <property type="match status" value="1"/>
</dbReference>
<dbReference type="FunFam" id="2.10.25.10:FF:000180">
    <property type="entry name" value="Netrin G2"/>
    <property type="match status" value="1"/>
</dbReference>
<dbReference type="Gene3D" id="2.60.120.260">
    <property type="entry name" value="Galactose-binding domain-like"/>
    <property type="match status" value="1"/>
</dbReference>
<dbReference type="Gene3D" id="2.10.25.10">
    <property type="entry name" value="Laminin"/>
    <property type="match status" value="4"/>
</dbReference>
<dbReference type="InterPro" id="IPR000742">
    <property type="entry name" value="EGF-like_dom"/>
</dbReference>
<dbReference type="InterPro" id="IPR050440">
    <property type="entry name" value="Laminin/Netrin_ECM"/>
</dbReference>
<dbReference type="InterPro" id="IPR008211">
    <property type="entry name" value="Laminin_N"/>
</dbReference>
<dbReference type="InterPro" id="IPR002049">
    <property type="entry name" value="LE_dom"/>
</dbReference>
<dbReference type="InterPro" id="IPR056863">
    <property type="entry name" value="LMN_ATRN_NET-like_EGF"/>
</dbReference>
<dbReference type="PANTHER" id="PTHR10574:SF28">
    <property type="entry name" value="NETRIN-G1"/>
    <property type="match status" value="1"/>
</dbReference>
<dbReference type="PANTHER" id="PTHR10574">
    <property type="entry name" value="NETRIN/LAMININ-RELATED"/>
    <property type="match status" value="1"/>
</dbReference>
<dbReference type="Pfam" id="PF00053">
    <property type="entry name" value="EGF_laminin"/>
    <property type="match status" value="1"/>
</dbReference>
<dbReference type="Pfam" id="PF24973">
    <property type="entry name" value="EGF_LMN_ATRN"/>
    <property type="match status" value="2"/>
</dbReference>
<dbReference type="Pfam" id="PF00055">
    <property type="entry name" value="Laminin_N"/>
    <property type="match status" value="1"/>
</dbReference>
<dbReference type="SMART" id="SM00181">
    <property type="entry name" value="EGF"/>
    <property type="match status" value="2"/>
</dbReference>
<dbReference type="SMART" id="SM00180">
    <property type="entry name" value="EGF_Lam"/>
    <property type="match status" value="3"/>
</dbReference>
<dbReference type="SMART" id="SM00136">
    <property type="entry name" value="LamNT"/>
    <property type="match status" value="1"/>
</dbReference>
<dbReference type="SUPFAM" id="SSF57196">
    <property type="entry name" value="EGF/Laminin"/>
    <property type="match status" value="2"/>
</dbReference>
<dbReference type="PROSITE" id="PS00022">
    <property type="entry name" value="EGF_1"/>
    <property type="match status" value="3"/>
</dbReference>
<dbReference type="PROSITE" id="PS50026">
    <property type="entry name" value="EGF_3"/>
    <property type="match status" value="1"/>
</dbReference>
<dbReference type="PROSITE" id="PS01248">
    <property type="entry name" value="EGF_LAM_1"/>
    <property type="match status" value="1"/>
</dbReference>
<dbReference type="PROSITE" id="PS50027">
    <property type="entry name" value="EGF_LAM_2"/>
    <property type="match status" value="3"/>
</dbReference>
<dbReference type="PROSITE" id="PS51117">
    <property type="entry name" value="LAMININ_NTER"/>
    <property type="match status" value="1"/>
</dbReference>